<feature type="chain" id="PRO_0000456469" description="Carbonic anhydrase">
    <location>
        <begin position="1"/>
        <end position="182"/>
    </location>
</feature>
<feature type="binding site" evidence="2 7">
    <location>
        <position position="64"/>
    </location>
    <ligand>
        <name>Mg(2+)</name>
        <dbReference type="ChEBI" id="CHEBI:18420"/>
    </ligand>
</feature>
<feature type="binding site" evidence="2 7">
    <location>
        <position position="81"/>
    </location>
    <ligand>
        <name>Mg(2+)</name>
        <dbReference type="ChEBI" id="CHEBI:18420"/>
    </ligand>
</feature>
<feature type="binding site" evidence="2 7">
    <location>
        <position position="86"/>
    </location>
    <ligand>
        <name>Mg(2+)</name>
        <dbReference type="ChEBI" id="CHEBI:18420"/>
    </ligand>
</feature>
<feature type="mutagenesis site" description="Retains 45% of wild-type activity." evidence="2">
    <original>R</original>
    <variation>A</variation>
    <location>
        <position position="43"/>
    </location>
</feature>
<feature type="mutagenesis site" description="Retains 65% of wild-type activity." evidence="2">
    <original>N</original>
    <variation>A</variation>
    <location>
        <position position="56"/>
    </location>
</feature>
<feature type="mutagenesis site" description="Retains 20% of wild-type activity." evidence="2">
    <original>Q</original>
    <variation>A</variation>
    <location>
        <position position="58"/>
    </location>
</feature>
<feature type="mutagenesis site" description="Retains 20% of wild-type activity." evidence="2">
    <original>H</original>
    <variation>A</variation>
    <location>
        <position position="64"/>
    </location>
</feature>
<feature type="mutagenesis site" description="Retains 10% of wild-type activity." evidence="2">
    <original>Y</original>
    <variation>A</variation>
    <location>
        <position position="158"/>
    </location>
</feature>
<feature type="strand" evidence="8">
    <location>
        <begin position="1"/>
        <end position="3"/>
    </location>
</feature>
<feature type="strand" evidence="8">
    <location>
        <begin position="23"/>
        <end position="30"/>
    </location>
</feature>
<feature type="strand" evidence="8">
    <location>
        <begin position="41"/>
        <end position="51"/>
    </location>
</feature>
<feature type="strand" evidence="8">
    <location>
        <begin position="62"/>
        <end position="64"/>
    </location>
</feature>
<feature type="strand" evidence="8">
    <location>
        <begin position="71"/>
        <end position="73"/>
    </location>
</feature>
<feature type="strand" evidence="8">
    <location>
        <begin position="84"/>
        <end position="87"/>
    </location>
</feature>
<feature type="strand" evidence="8">
    <location>
        <begin position="130"/>
        <end position="133"/>
    </location>
</feature>
<feature type="turn" evidence="8">
    <location>
        <begin position="134"/>
        <end position="137"/>
    </location>
</feature>
<feature type="strand" evidence="8">
    <location>
        <begin position="138"/>
        <end position="142"/>
    </location>
</feature>
<feature type="helix" evidence="8">
    <location>
        <begin position="145"/>
        <end position="169"/>
    </location>
</feature>
<organism>
    <name type="scientific">Geobacillus kaustophilus (strain HTA426)</name>
    <dbReference type="NCBI Taxonomy" id="235909"/>
    <lineage>
        <taxon>Bacteria</taxon>
        <taxon>Bacillati</taxon>
        <taxon>Bacillota</taxon>
        <taxon>Bacilli</taxon>
        <taxon>Bacillales</taxon>
        <taxon>Anoxybacillaceae</taxon>
        <taxon>Geobacillus</taxon>
        <taxon>Geobacillus thermoleovorans group</taxon>
    </lineage>
</organism>
<keyword id="KW-0002">3D-structure</keyword>
<keyword id="KW-0456">Lyase</keyword>
<keyword id="KW-0460">Magnesium</keyword>
<keyword id="KW-0479">Metal-binding</keyword>
<keyword id="KW-1185">Reference proteome</keyword>
<keyword id="KW-0862">Zinc</keyword>
<dbReference type="EC" id="4.2.1.1" evidence="1 2"/>
<dbReference type="EMBL" id="BA000043">
    <property type="protein sequence ID" value="BAD77133.1"/>
    <property type="molecule type" value="Genomic_DNA"/>
</dbReference>
<dbReference type="RefSeq" id="WP_011232320.1">
    <property type="nucleotide sequence ID" value="NC_006510.1"/>
</dbReference>
<dbReference type="PDB" id="3VNP">
    <property type="method" value="X-ray"/>
    <property type="resolution" value="2.40 A"/>
    <property type="chains" value="A/B/C=1-182"/>
</dbReference>
<dbReference type="PDBsum" id="3VNP"/>
<dbReference type="SMR" id="Q5KW03"/>
<dbReference type="STRING" id="235909.GK2848"/>
<dbReference type="KEGG" id="gka:GK2848"/>
<dbReference type="eggNOG" id="COG0663">
    <property type="taxonomic scope" value="Bacteria"/>
</dbReference>
<dbReference type="HOGENOM" id="CLU_064827_4_1_9"/>
<dbReference type="EvolutionaryTrace" id="Q5KW03"/>
<dbReference type="Proteomes" id="UP000001172">
    <property type="component" value="Chromosome"/>
</dbReference>
<dbReference type="GO" id="GO:0016829">
    <property type="term" value="F:lyase activity"/>
    <property type="evidence" value="ECO:0007669"/>
    <property type="project" value="UniProtKB-KW"/>
</dbReference>
<dbReference type="GO" id="GO:0046872">
    <property type="term" value="F:metal ion binding"/>
    <property type="evidence" value="ECO:0007669"/>
    <property type="project" value="UniProtKB-KW"/>
</dbReference>
<dbReference type="CDD" id="cd04645">
    <property type="entry name" value="LbH_gamma_CA_like"/>
    <property type="match status" value="1"/>
</dbReference>
<dbReference type="Gene3D" id="2.160.10.10">
    <property type="entry name" value="Hexapeptide repeat proteins"/>
    <property type="match status" value="1"/>
</dbReference>
<dbReference type="InterPro" id="IPR001451">
    <property type="entry name" value="Hexapep"/>
</dbReference>
<dbReference type="InterPro" id="IPR047324">
    <property type="entry name" value="LbH_gamma_CA-like"/>
</dbReference>
<dbReference type="InterPro" id="IPR050484">
    <property type="entry name" value="Transf_Hexapept/Carb_Anhydrase"/>
</dbReference>
<dbReference type="InterPro" id="IPR011004">
    <property type="entry name" value="Trimer_LpxA-like_sf"/>
</dbReference>
<dbReference type="PANTHER" id="PTHR13061">
    <property type="entry name" value="DYNACTIN SUBUNIT P25"/>
    <property type="match status" value="1"/>
</dbReference>
<dbReference type="PANTHER" id="PTHR13061:SF29">
    <property type="entry name" value="GAMMA CARBONIC ANHYDRASE-LIKE 1, MITOCHONDRIAL-RELATED"/>
    <property type="match status" value="1"/>
</dbReference>
<dbReference type="Pfam" id="PF00132">
    <property type="entry name" value="Hexapep"/>
    <property type="match status" value="2"/>
</dbReference>
<dbReference type="SUPFAM" id="SSF51161">
    <property type="entry name" value="Trimeric LpxA-like enzymes"/>
    <property type="match status" value="1"/>
</dbReference>
<protein>
    <recommendedName>
        <fullName evidence="3">Carbonic anhydrase</fullName>
        <ecNumber evidence="1 2">4.2.1.1</ecNumber>
    </recommendedName>
    <alternativeName>
        <fullName evidence="4">Gamma-carbonic anhydrase</fullName>
        <shortName evidence="4">Cag</shortName>
    </alternativeName>
</protein>
<proteinExistence type="evidence at protein level"/>
<accession>Q5KW03</accession>
<reference key="1">
    <citation type="journal article" date="2004" name="Nucleic Acids Res.">
        <title>Thermoadaptation trait revealed by the genome sequence of thermophilic Geobacillus kaustophilus.</title>
        <authorList>
            <person name="Takami H."/>
            <person name="Takaki Y."/>
            <person name="Chee G.-J."/>
            <person name="Nishi S."/>
            <person name="Shimamura S."/>
            <person name="Suzuki H."/>
            <person name="Matsui S."/>
            <person name="Uchiyama I."/>
        </authorList>
    </citation>
    <scope>NUCLEOTIDE SEQUENCE [LARGE SCALE GENOMIC DNA]</scope>
    <source>
        <strain>HTA426</strain>
    </source>
</reference>
<reference key="2">
    <citation type="journal article" date="2013" name="Acta Crystallogr. F">
        <title>Crystallization, characterization and preliminary X-ray crystallographic analysis of GK2848, a putative carbonic anhydrase of Geobacillus kaustophilus.</title>
        <authorList>
            <person name="Ragunathan P."/>
            <person name="Raghunath G."/>
            <person name="Kuramitsu S."/>
            <person name="Yokoyama S."/>
            <person name="Kumarevel T."/>
            <person name="Ponnuraj K."/>
        </authorList>
    </citation>
    <scope>FUNCTION</scope>
    <scope>CATALYTIC ACTIVITY</scope>
    <scope>SUBUNIT</scope>
    <scope>CRYSTALLIZATION</scope>
    <source>
        <strain>HTA426</strain>
    </source>
</reference>
<reference evidence="7" key="3">
    <citation type="journal article" date="2021" name="Biochem. Biophys. Res. Commun.">
        <title>Structural and functional characterization of a putative carbonic anhydrase from Geobacillus kaustophilus reveals its cambialistic function.</title>
        <authorList>
            <person name="Sridharan U."/>
            <person name="Ragunathan P."/>
            <person name="Kuramitsu S."/>
            <person name="Yokoyama S."/>
            <person name="Kumarevel T."/>
            <person name="Ponnuraj K."/>
        </authorList>
    </citation>
    <scope>X-RAY CRYSTALLOGRAPHY (2.40 ANGSTROMS) IN COMPLEX WITH MAGNESIUM</scope>
    <scope>FUNCTION</scope>
    <scope>CATALYTIC ACTIVITY</scope>
    <scope>COFACTOR</scope>
    <scope>BIOPHYSICOCHEMICAL PROPERTIES</scope>
    <scope>SUBUNIT</scope>
    <scope>MUTAGENESIS OF ARG-43; ASN-56; GLN-58; HIS-64 AND TYR-158</scope>
    <source>
        <strain>HTA426</strain>
    </source>
</reference>
<evidence type="ECO:0000269" key="1">
    <source>
    </source>
</evidence>
<evidence type="ECO:0000269" key="2">
    <source>
    </source>
</evidence>
<evidence type="ECO:0000303" key="3">
    <source>
    </source>
</evidence>
<evidence type="ECO:0000303" key="4">
    <source>
    </source>
</evidence>
<evidence type="ECO:0000305" key="5"/>
<evidence type="ECO:0000312" key="6">
    <source>
        <dbReference type="EMBL" id="BAD77133.1"/>
    </source>
</evidence>
<evidence type="ECO:0007744" key="7">
    <source>
        <dbReference type="PDB" id="3VNP"/>
    </source>
</evidence>
<evidence type="ECO:0007829" key="8">
    <source>
        <dbReference type="PDB" id="3VNP"/>
    </source>
</evidence>
<gene>
    <name evidence="6" type="ordered locus">GK2848</name>
</gene>
<name>CAG_GEOKA</name>
<sequence>MIYPYKGKTPQIAASAFIADYVTITGDVVIGEETSIWFNTVIRGDVAPTVIGNRVNIQDNSILHQSPNNPLIIEDGVTVGHQVILHSAIVRKNALIGMGSIILDRAEIGEGAFIGAGSLVPPGKKIPPNTLALGRPAKVVRELTEDDIREMERIRREYVEKGQYYKALQQQRTSCADKKELP</sequence>
<comment type="function">
    <text evidence="1 2">Reversible hydration of carbon dioxide.</text>
</comment>
<comment type="catalytic activity">
    <reaction evidence="1 2">
        <text>hydrogencarbonate + H(+) = CO2 + H2O</text>
        <dbReference type="Rhea" id="RHEA:10748"/>
        <dbReference type="ChEBI" id="CHEBI:15377"/>
        <dbReference type="ChEBI" id="CHEBI:15378"/>
        <dbReference type="ChEBI" id="CHEBI:16526"/>
        <dbReference type="ChEBI" id="CHEBI:17544"/>
        <dbReference type="EC" id="4.2.1.1"/>
    </reaction>
</comment>
<comment type="cofactor">
    <cofactor evidence="2">
        <name>Mg(2+)</name>
        <dbReference type="ChEBI" id="CHEBI:18420"/>
    </cofactor>
    <cofactor evidence="2">
        <name>Zn(2+)</name>
        <dbReference type="ChEBI" id="CHEBI:29105"/>
    </cofactor>
    <text evidence="2">Either Mg(2+) or Zn(2+) can occupy the active site.</text>
</comment>
<comment type="biophysicochemical properties">
    <temperatureDependence>
        <text evidence="2">Highly thermostable. Is active at high temperatures (60 and 80 degrees Celsius).</text>
    </temperatureDependence>
</comment>
<comment type="subunit">
    <text evidence="1 2">Homotrimer.</text>
</comment>
<comment type="similarity">
    <text evidence="5">Belongs to the gamma-class carbonic anhydrase family.</text>
</comment>